<evidence type="ECO:0000250" key="1"/>
<evidence type="ECO:0000255" key="2"/>
<evidence type="ECO:0000255" key="3">
    <source>
        <dbReference type="PROSITE-ProRule" id="PRU00521"/>
    </source>
</evidence>
<evidence type="ECO:0000269" key="4">
    <source>
    </source>
</evidence>
<evidence type="ECO:0000269" key="5">
    <source>
    </source>
</evidence>
<proteinExistence type="evidence at protein level"/>
<keyword id="KW-0053">Apoptosis</keyword>
<keyword id="KW-0131">Cell cycle</keyword>
<keyword id="KW-1003">Cell membrane</keyword>
<keyword id="KW-0966">Cell projection</keyword>
<keyword id="KW-0963">Cytoplasm</keyword>
<keyword id="KW-0968">Cytoplasmic vesicle</keyword>
<keyword id="KW-0206">Cytoskeleton</keyword>
<keyword id="KW-0217">Developmental protein</keyword>
<keyword id="KW-0221">Differentiation</keyword>
<keyword id="KW-1015">Disulfide bond</keyword>
<keyword id="KW-0256">Endoplasmic reticulum</keyword>
<keyword id="KW-0967">Endosome</keyword>
<keyword id="KW-0297">G-protein coupled receptor</keyword>
<keyword id="KW-0333">Golgi apparatus</keyword>
<keyword id="KW-0472">Membrane</keyword>
<keyword id="KW-0496">Mitochondrion</keyword>
<keyword id="KW-0524">Neurogenesis</keyword>
<keyword id="KW-0539">Nucleus</keyword>
<keyword id="KW-0628">Postsynaptic cell membrane</keyword>
<keyword id="KW-0675">Receptor</keyword>
<keyword id="KW-0770">Synapse</keyword>
<keyword id="KW-0807">Transducer</keyword>
<keyword id="KW-0812">Transmembrane</keyword>
<keyword id="KW-1133">Transmembrane helix</keyword>
<sequence>MEEQTTSLVWIYVNSTEQLNTSYEYNTTYLIEDSDKYQSYVIGLFLSCLYTILLFPIGFIGNILILVVNLNHRGKMAIPDLYFVNLAVADLILVADSLIEVFNLNEKYYDYAVLCTFMSLFLQVNMYSSIFFLTWMSFDRYIALANSMSSSPLRTMQHAKLSCGLIWMASILATLLPFTIVQTQHRGEVHFCFANVFEIQWLEVTIGFLVPFSIIGLCYSLIGRILMRSQKHRGLWPRRQKALRMIVVVVLVFFICWLPENVFISIQLLQGTADPSQRTATTLRHDYPLTGHIVNLAAFSNSCLNPIIYSFLGETFRDKLRLFIKQKASWSVVNRFCHHGLDLHLPVRSEVSEV</sequence>
<accession>B0F9W3</accession>
<dbReference type="EMBL" id="EU274298">
    <property type="protein sequence ID" value="ABY51613.1"/>
    <property type="molecule type" value="mRNA"/>
</dbReference>
<dbReference type="SMR" id="B0F9W3"/>
<dbReference type="GO" id="GO:0030424">
    <property type="term" value="C:axon"/>
    <property type="evidence" value="ECO:0007669"/>
    <property type="project" value="UniProtKB-SubCell"/>
</dbReference>
<dbReference type="GO" id="GO:0016323">
    <property type="term" value="C:basolateral plasma membrane"/>
    <property type="evidence" value="ECO:0007669"/>
    <property type="project" value="UniProtKB-SubCell"/>
</dbReference>
<dbReference type="GO" id="GO:0030659">
    <property type="term" value="C:cytoplasmic vesicle membrane"/>
    <property type="evidence" value="ECO:0007669"/>
    <property type="project" value="UniProtKB-SubCell"/>
</dbReference>
<dbReference type="GO" id="GO:0005856">
    <property type="term" value="C:cytoskeleton"/>
    <property type="evidence" value="ECO:0007669"/>
    <property type="project" value="UniProtKB-SubCell"/>
</dbReference>
<dbReference type="GO" id="GO:0032591">
    <property type="term" value="C:dendritic spine membrane"/>
    <property type="evidence" value="ECO:0007669"/>
    <property type="project" value="UniProtKB-SubCell"/>
</dbReference>
<dbReference type="GO" id="GO:0005769">
    <property type="term" value="C:early endosome"/>
    <property type="evidence" value="ECO:0007669"/>
    <property type="project" value="UniProtKB-SubCell"/>
</dbReference>
<dbReference type="GO" id="GO:0005789">
    <property type="term" value="C:endoplasmic reticulum membrane"/>
    <property type="evidence" value="ECO:0007669"/>
    <property type="project" value="UniProtKB-SubCell"/>
</dbReference>
<dbReference type="GO" id="GO:0000139">
    <property type="term" value="C:Golgi membrane"/>
    <property type="evidence" value="ECO:0007669"/>
    <property type="project" value="UniProtKB-SubCell"/>
</dbReference>
<dbReference type="GO" id="GO:0031966">
    <property type="term" value="C:mitochondrial membrane"/>
    <property type="evidence" value="ECO:0007669"/>
    <property type="project" value="UniProtKB-SubCell"/>
</dbReference>
<dbReference type="GO" id="GO:0005634">
    <property type="term" value="C:nucleus"/>
    <property type="evidence" value="ECO:0007669"/>
    <property type="project" value="UniProtKB-SubCell"/>
</dbReference>
<dbReference type="GO" id="GO:0048471">
    <property type="term" value="C:perinuclear region of cytoplasm"/>
    <property type="evidence" value="ECO:0007669"/>
    <property type="project" value="UniProtKB-SubCell"/>
</dbReference>
<dbReference type="GO" id="GO:0005886">
    <property type="term" value="C:plasma membrane"/>
    <property type="evidence" value="ECO:0000314"/>
    <property type="project" value="UniProtKB"/>
</dbReference>
<dbReference type="GO" id="GO:0014069">
    <property type="term" value="C:postsynaptic density"/>
    <property type="evidence" value="ECO:0007669"/>
    <property type="project" value="UniProtKB-SubCell"/>
</dbReference>
<dbReference type="GO" id="GO:0045211">
    <property type="term" value="C:postsynaptic membrane"/>
    <property type="evidence" value="ECO:0007669"/>
    <property type="project" value="UniProtKB-KW"/>
</dbReference>
<dbReference type="GO" id="GO:0055037">
    <property type="term" value="C:recycling endosome"/>
    <property type="evidence" value="ECO:0007669"/>
    <property type="project" value="UniProtKB-SubCell"/>
</dbReference>
<dbReference type="GO" id="GO:0004930">
    <property type="term" value="F:G protein-coupled receptor activity"/>
    <property type="evidence" value="ECO:0007669"/>
    <property type="project" value="UniProtKB-KW"/>
</dbReference>
<dbReference type="GO" id="GO:0030284">
    <property type="term" value="F:nuclear estrogen receptor activity"/>
    <property type="evidence" value="ECO:0007669"/>
    <property type="project" value="TreeGrafter"/>
</dbReference>
<dbReference type="GO" id="GO:0005496">
    <property type="term" value="F:steroid binding"/>
    <property type="evidence" value="ECO:0000314"/>
    <property type="project" value="UniProtKB"/>
</dbReference>
<dbReference type="GO" id="GO:1990239">
    <property type="term" value="F:steroid hormone binding"/>
    <property type="evidence" value="ECO:0000314"/>
    <property type="project" value="UniProtKB"/>
</dbReference>
<dbReference type="GO" id="GO:0007189">
    <property type="term" value="P:adenylate cyclase-activating G protein-coupled receptor signaling pathway"/>
    <property type="evidence" value="ECO:0000314"/>
    <property type="project" value="UniProtKB"/>
</dbReference>
<dbReference type="GO" id="GO:0006915">
    <property type="term" value="P:apoptotic process"/>
    <property type="evidence" value="ECO:0007669"/>
    <property type="project" value="UniProtKB-KW"/>
</dbReference>
<dbReference type="GO" id="GO:0030154">
    <property type="term" value="P:cell differentiation"/>
    <property type="evidence" value="ECO:0007669"/>
    <property type="project" value="UniProtKB-KW"/>
</dbReference>
<dbReference type="GO" id="GO:0071392">
    <property type="term" value="P:cellular response to estradiol stimulus"/>
    <property type="evidence" value="ECO:0000314"/>
    <property type="project" value="UniProtKB"/>
</dbReference>
<dbReference type="GO" id="GO:0071371">
    <property type="term" value="P:cellular response to gonadotropin stimulus"/>
    <property type="evidence" value="ECO:0000314"/>
    <property type="project" value="UniProtKB"/>
</dbReference>
<dbReference type="GO" id="GO:0051447">
    <property type="term" value="P:negative regulation of meiotic cell cycle"/>
    <property type="evidence" value="ECO:0000314"/>
    <property type="project" value="UniProtKB"/>
</dbReference>
<dbReference type="GO" id="GO:1900194">
    <property type="term" value="P:negative regulation of oocyte maturation"/>
    <property type="evidence" value="ECO:0000314"/>
    <property type="project" value="UniProtKB"/>
</dbReference>
<dbReference type="GO" id="GO:0007399">
    <property type="term" value="P:nervous system development"/>
    <property type="evidence" value="ECO:0007669"/>
    <property type="project" value="UniProtKB-KW"/>
</dbReference>
<dbReference type="GO" id="GO:0043401">
    <property type="term" value="P:steroid hormone receptor signaling pathway"/>
    <property type="evidence" value="ECO:0000314"/>
    <property type="project" value="UniProtKB"/>
</dbReference>
<dbReference type="FunFam" id="1.20.1070.10:FF:000093">
    <property type="entry name" value="G-protein coupled estrogen receptor 1"/>
    <property type="match status" value="1"/>
</dbReference>
<dbReference type="Gene3D" id="1.20.1070.10">
    <property type="entry name" value="Rhodopsin 7-helix transmembrane proteins"/>
    <property type="match status" value="1"/>
</dbReference>
<dbReference type="InterPro" id="IPR000276">
    <property type="entry name" value="GPCR_Rhodpsn"/>
</dbReference>
<dbReference type="InterPro" id="IPR017452">
    <property type="entry name" value="GPCR_Rhodpsn_7TM"/>
</dbReference>
<dbReference type="InterPro" id="IPR047143">
    <property type="entry name" value="GPER1-like"/>
</dbReference>
<dbReference type="PANTHER" id="PTHR24226:SF2">
    <property type="entry name" value="G-PROTEIN COUPLED ESTROGEN RECEPTOR 1"/>
    <property type="match status" value="1"/>
</dbReference>
<dbReference type="PANTHER" id="PTHR24226">
    <property type="entry name" value="G-PROTEIN COUPLED RECEPTOR 182 AND ESTROGEN RECEPTOR 1"/>
    <property type="match status" value="1"/>
</dbReference>
<dbReference type="Pfam" id="PF00001">
    <property type="entry name" value="7tm_1"/>
    <property type="match status" value="1"/>
</dbReference>
<dbReference type="PRINTS" id="PR00237">
    <property type="entry name" value="GPCRRHODOPSN"/>
</dbReference>
<dbReference type="SUPFAM" id="SSF81321">
    <property type="entry name" value="Family A G protein-coupled receptor-like"/>
    <property type="match status" value="1"/>
</dbReference>
<dbReference type="PROSITE" id="PS00237">
    <property type="entry name" value="G_PROTEIN_RECEP_F1_1"/>
    <property type="match status" value="1"/>
</dbReference>
<dbReference type="PROSITE" id="PS50262">
    <property type="entry name" value="G_PROTEIN_RECEP_F1_2"/>
    <property type="match status" value="1"/>
</dbReference>
<reference key="1">
    <citation type="journal article" date="2008" name="Endocrinology">
        <title>Estrogen signaling characteristics of Atlantic croaker G protein-coupled receptor 30 (GPR30) and evidence it is involved in maintenance of oocyte meiotic arrest.</title>
        <authorList>
            <person name="Pang Y."/>
            <person name="Dong J."/>
            <person name="Thomas P."/>
        </authorList>
    </citation>
    <scope>NUCLEOTIDE SEQUENCE [MRNA]</scope>
    <scope>FUNCTION</scope>
    <scope>ESTROGEN-BINDING</scope>
    <scope>BIOPHYSICOCHEMICAL PROPERTIES</scope>
    <scope>SUBCELLULAR LOCATION</scope>
    <scope>TISSUE SPECIFICITY</scope>
    <scope>DEVELOPMENTAL STAGE</scope>
</reference>
<reference key="2">
    <citation type="journal article" date="2010" name="Steroids">
        <title>Conserved estrogen binding and signaling functions of the G protein-coupled estrogen receptor 1 (GPER) in mammals and fish.</title>
        <authorList>
            <person name="Thomas P."/>
            <person name="Alyea R."/>
            <person name="Pang Y."/>
            <person name="Peyton C."/>
            <person name="Dong J."/>
            <person name="Berg A.H."/>
        </authorList>
    </citation>
    <scope>FUNCTION</scope>
    <scope>ESTROGEN-BINDING</scope>
    <scope>BIOPHYSICOCHEMICAL PROPERTIES</scope>
</reference>
<name>GPER1_MICUN</name>
<gene>
    <name type="primary">gper1</name>
</gene>
<comment type="function">
    <text evidence="4 5">Membrane G-protein coupled estrogen receptor that binds to 17-beta-estradiol (E2) with high affinity, leading to rapid and transient activation of numerous intracellular signaling pathways. Plays a role in the embryonic development of sensory and motor neurons. May induce apoptosis and reduce proliferation of brain cells. Involved in maintenance of meiotic arrest in oocytes.</text>
</comment>
<comment type="biophysicochemical properties">
    <kinetics>
        <text evidence="4 5">Binds 17-beta-estradiol (E2) in plasma membranes with high affinity and displays rapid kinetics of association and dissociation.</text>
    </kinetics>
</comment>
<comment type="subunit">
    <text evidence="1">Homodimer. Heterodimer (By similarity).</text>
</comment>
<comment type="subcellular location">
    <subcellularLocation>
        <location evidence="1">Nucleus</location>
    </subcellularLocation>
    <subcellularLocation>
        <location evidence="1">Cytoplasm</location>
        <location evidence="1">Perinuclear region</location>
    </subcellularLocation>
    <subcellularLocation>
        <location evidence="1">Cytoplasm</location>
    </subcellularLocation>
    <subcellularLocation>
        <location evidence="1">Cytoplasm</location>
        <location evidence="1">Cytoskeleton</location>
    </subcellularLocation>
    <subcellularLocation>
        <location evidence="1">Cytoplasmic vesicle membrane</location>
        <topology evidence="1">Multi-pass membrane protein</topology>
    </subcellularLocation>
    <subcellularLocation>
        <location evidence="4">Cell membrane</location>
        <topology evidence="4">Multi-pass membrane protein</topology>
    </subcellularLocation>
    <subcellularLocation>
        <location evidence="1">Basolateral cell membrane</location>
        <topology evidence="1">Multi-pass membrane protein</topology>
    </subcellularLocation>
    <subcellularLocation>
        <location evidence="1">Endoplasmic reticulum membrane</location>
        <topology evidence="1">Multi-pass membrane protein</topology>
    </subcellularLocation>
    <subcellularLocation>
        <location evidence="1">Early endosome</location>
    </subcellularLocation>
    <subcellularLocation>
        <location evidence="1">Recycling endosome</location>
    </subcellularLocation>
    <subcellularLocation>
        <location evidence="1">Golgi apparatus</location>
        <location evidence="1">trans-Golgi network</location>
    </subcellularLocation>
    <subcellularLocation>
        <location evidence="1">Golgi apparatus membrane</location>
        <topology evidence="1">Multi-pass membrane protein</topology>
    </subcellularLocation>
    <subcellularLocation>
        <location evidence="1">Cell projection</location>
        <location evidence="1">Dendrite</location>
    </subcellularLocation>
    <subcellularLocation>
        <location evidence="1">Cell projection</location>
        <location evidence="1">Dendritic spine membrane</location>
        <topology evidence="1">Multi-pass membrane protein</topology>
    </subcellularLocation>
    <subcellularLocation>
        <location evidence="1">Cell projection</location>
        <location evidence="1">Axon</location>
    </subcellularLocation>
    <subcellularLocation>
        <location evidence="1">Postsynaptic density</location>
    </subcellularLocation>
    <subcellularLocation>
        <location evidence="1">Mitochondrion membrane</location>
        <topology evidence="1">Multi-pass membrane protein</topology>
    </subcellularLocation>
    <text>Colocalized with cadherin at the plasma membrane.</text>
</comment>
<comment type="tissue specificity">
    <text evidence="4">Expressed in oocytes (at protein level). Highly expressed in brain, heart, testis and ovary. Weakly expressed in muscle and intestine.</text>
</comment>
<comment type="developmental stage">
    <text evidence="4">Expressed during oocyte development.</text>
</comment>
<comment type="similarity">
    <text evidence="3">Belongs to the G-protein coupled receptor 1 family.</text>
</comment>
<feature type="chain" id="PRO_0000424545" description="G-protein coupled estrogen receptor 1">
    <location>
        <begin position="1"/>
        <end position="354"/>
    </location>
</feature>
<feature type="topological domain" description="Extracellular" evidence="2">
    <location>
        <begin position="1"/>
        <end position="40"/>
    </location>
</feature>
<feature type="transmembrane region" description="Helical; Name=1" evidence="2">
    <location>
        <begin position="41"/>
        <end position="61"/>
    </location>
</feature>
<feature type="topological domain" description="Cytoplasmic" evidence="2">
    <location>
        <begin position="62"/>
        <end position="81"/>
    </location>
</feature>
<feature type="transmembrane region" description="Helical; Name=2" evidence="2">
    <location>
        <begin position="82"/>
        <end position="102"/>
    </location>
</feature>
<feature type="topological domain" description="Extracellular" evidence="2">
    <location>
        <begin position="103"/>
        <end position="112"/>
    </location>
</feature>
<feature type="transmembrane region" description="Helical; Name=3" evidence="2">
    <location>
        <begin position="113"/>
        <end position="133"/>
    </location>
</feature>
<feature type="topological domain" description="Cytoplasmic" evidence="2">
    <location>
        <begin position="134"/>
        <end position="160"/>
    </location>
</feature>
<feature type="transmembrane region" description="Helical; Name=4" evidence="2">
    <location>
        <begin position="161"/>
        <end position="181"/>
    </location>
</feature>
<feature type="topological domain" description="Extracellular" evidence="2">
    <location>
        <begin position="182"/>
        <end position="202"/>
    </location>
</feature>
<feature type="transmembrane region" description="Helical; Name=5" evidence="2">
    <location>
        <begin position="203"/>
        <end position="223"/>
    </location>
</feature>
<feature type="topological domain" description="Cytoplasmic" evidence="2">
    <location>
        <begin position="224"/>
        <end position="245"/>
    </location>
</feature>
<feature type="transmembrane region" description="Helical; Name=6" evidence="2">
    <location>
        <begin position="246"/>
        <end position="266"/>
    </location>
</feature>
<feature type="topological domain" description="Extracellular" evidence="2">
    <location>
        <begin position="267"/>
        <end position="292"/>
    </location>
</feature>
<feature type="transmembrane region" description="Helical; Name=7" evidence="2">
    <location>
        <begin position="293"/>
        <end position="313"/>
    </location>
</feature>
<feature type="topological domain" description="Cytoplasmic" evidence="2">
    <location>
        <begin position="314"/>
        <end position="353"/>
    </location>
</feature>
<feature type="disulfide bond" evidence="3">
    <location>
        <begin position="115"/>
        <end position="192"/>
    </location>
</feature>
<organism>
    <name type="scientific">Micropogonias undulatus</name>
    <name type="common">Atlantic croaker</name>
    <dbReference type="NCBI Taxonomy" id="29154"/>
    <lineage>
        <taxon>Eukaryota</taxon>
        <taxon>Metazoa</taxon>
        <taxon>Chordata</taxon>
        <taxon>Craniata</taxon>
        <taxon>Vertebrata</taxon>
        <taxon>Euteleostomi</taxon>
        <taxon>Actinopterygii</taxon>
        <taxon>Neopterygii</taxon>
        <taxon>Teleostei</taxon>
        <taxon>Neoteleostei</taxon>
        <taxon>Acanthomorphata</taxon>
        <taxon>Eupercaria</taxon>
        <taxon>Sciaenidae</taxon>
        <taxon>Micropogonias</taxon>
    </lineage>
</organism>
<protein>
    <recommendedName>
        <fullName>G-protein coupled estrogen receptor 1</fullName>
    </recommendedName>
    <alternativeName>
        <fullName>G protein-coupled estrogen receptor 1</fullName>
    </alternativeName>
    <alternativeName>
        <fullName>G-protein coupled receptor 30</fullName>
    </alternativeName>
</protein>